<reference key="1">
    <citation type="journal article" date="2006" name="J. Bacteriol.">
        <title>Complete genome sequence of Yersinia pestis strains Antiqua and Nepal516: evidence of gene reduction in an emerging pathogen.</title>
        <authorList>
            <person name="Chain P.S.G."/>
            <person name="Hu P."/>
            <person name="Malfatti S.A."/>
            <person name="Radnedge L."/>
            <person name="Larimer F."/>
            <person name="Vergez L.M."/>
            <person name="Worsham P."/>
            <person name="Chu M.C."/>
            <person name="Andersen G.L."/>
        </authorList>
    </citation>
    <scope>NUCLEOTIDE SEQUENCE [LARGE SCALE GENOMIC DNA]</scope>
    <source>
        <strain>Nepal516</strain>
    </source>
</reference>
<reference key="2">
    <citation type="submission" date="2009-04" db="EMBL/GenBank/DDBJ databases">
        <title>Yersinia pestis Nepal516A whole genome shotgun sequencing project.</title>
        <authorList>
            <person name="Plunkett G. III"/>
            <person name="Anderson B.D."/>
            <person name="Baumler D.J."/>
            <person name="Burland V."/>
            <person name="Cabot E.L."/>
            <person name="Glasner J.D."/>
            <person name="Mau B."/>
            <person name="Neeno-Eckwall E."/>
            <person name="Perna N.T."/>
            <person name="Munk A.C."/>
            <person name="Tapia R."/>
            <person name="Green L.D."/>
            <person name="Rogers Y.C."/>
            <person name="Detter J.C."/>
            <person name="Bruce D.C."/>
            <person name="Brettin T.S."/>
        </authorList>
    </citation>
    <scope>NUCLEOTIDE SEQUENCE [LARGE SCALE GENOMIC DNA]</scope>
    <source>
        <strain>Nepal516</strain>
    </source>
</reference>
<dbReference type="EMBL" id="CP000305">
    <property type="protein sequence ID" value="ABG19289.1"/>
    <property type="molecule type" value="Genomic_DNA"/>
</dbReference>
<dbReference type="EMBL" id="ACNQ01000017">
    <property type="protein sequence ID" value="EEO75438.1"/>
    <property type="molecule type" value="Genomic_DNA"/>
</dbReference>
<dbReference type="RefSeq" id="WP_002212127.1">
    <property type="nucleotide sequence ID" value="NZ_ACNQ01000017.1"/>
</dbReference>
<dbReference type="SMR" id="Q1CFE1"/>
<dbReference type="KEGG" id="ypn:YPN_2962"/>
<dbReference type="HOGENOM" id="CLU_136774_0_0_6"/>
<dbReference type="Proteomes" id="UP000008936">
    <property type="component" value="Chromosome"/>
</dbReference>
<dbReference type="HAMAP" id="MF_01519">
    <property type="entry name" value="UPF0325"/>
    <property type="match status" value="1"/>
</dbReference>
<dbReference type="InterPro" id="IPR020911">
    <property type="entry name" value="UPF0325"/>
</dbReference>
<dbReference type="NCBIfam" id="NF010213">
    <property type="entry name" value="PRK13677.1"/>
    <property type="match status" value="1"/>
</dbReference>
<dbReference type="Pfam" id="PF11944">
    <property type="entry name" value="DUF3461"/>
    <property type="match status" value="1"/>
</dbReference>
<proteinExistence type="inferred from homology"/>
<sequence length="129" mass="15232">MYDNLKSLGITQPEDVDRYSLRQEANNDILKIYFRKDKGEFFAKSVKFKYPRQRKTVVSDNASHGYKEINEINPNLRYVIDELDQLCKRDQIEVDLKRKILDDLRHLESVVTNKIAEIEADLEKLTNGR</sequence>
<protein>
    <recommendedName>
        <fullName evidence="1">UPF0325 protein YPN_2962</fullName>
    </recommendedName>
</protein>
<name>Y2962_YERPN</name>
<evidence type="ECO:0000255" key="1">
    <source>
        <dbReference type="HAMAP-Rule" id="MF_01519"/>
    </source>
</evidence>
<accession>Q1CFE1</accession>
<accession>C4GWY8</accession>
<gene>
    <name type="ordered locus">YPN_2962</name>
    <name type="ORF">YP516_3354</name>
</gene>
<comment type="similarity">
    <text evidence="1">Belongs to the UPF0325 family.</text>
</comment>
<feature type="chain" id="PRO_0000289325" description="UPF0325 protein YPN_2962">
    <location>
        <begin position="1"/>
        <end position="129"/>
    </location>
</feature>
<organism>
    <name type="scientific">Yersinia pestis bv. Antiqua (strain Nepal516)</name>
    <dbReference type="NCBI Taxonomy" id="377628"/>
    <lineage>
        <taxon>Bacteria</taxon>
        <taxon>Pseudomonadati</taxon>
        <taxon>Pseudomonadota</taxon>
        <taxon>Gammaproteobacteria</taxon>
        <taxon>Enterobacterales</taxon>
        <taxon>Yersiniaceae</taxon>
        <taxon>Yersinia</taxon>
    </lineage>
</organism>